<gene>
    <name type="primary">Ankrd13c</name>
</gene>
<organism>
    <name type="scientific">Mus musculus</name>
    <name type="common">Mouse</name>
    <dbReference type="NCBI Taxonomy" id="10090"/>
    <lineage>
        <taxon>Eukaryota</taxon>
        <taxon>Metazoa</taxon>
        <taxon>Chordata</taxon>
        <taxon>Craniata</taxon>
        <taxon>Vertebrata</taxon>
        <taxon>Euteleostomi</taxon>
        <taxon>Mammalia</taxon>
        <taxon>Eutheria</taxon>
        <taxon>Euarchontoglires</taxon>
        <taxon>Glires</taxon>
        <taxon>Rodentia</taxon>
        <taxon>Myomorpha</taxon>
        <taxon>Muroidea</taxon>
        <taxon>Muridae</taxon>
        <taxon>Murinae</taxon>
        <taxon>Mus</taxon>
        <taxon>Mus</taxon>
    </lineage>
</organism>
<evidence type="ECO:0000250" key="1"/>
<evidence type="ECO:0000256" key="2">
    <source>
        <dbReference type="SAM" id="MobiDB-lite"/>
    </source>
</evidence>
<evidence type="ECO:0000303" key="3">
    <source>
    </source>
</evidence>
<evidence type="ECO:0000305" key="4"/>
<evidence type="ECO:0007744" key="5">
    <source>
    </source>
</evidence>
<keyword id="KW-0025">Alternative splicing</keyword>
<keyword id="KW-0040">ANK repeat</keyword>
<keyword id="KW-0143">Chaperone</keyword>
<keyword id="KW-0256">Endoplasmic reticulum</keyword>
<keyword id="KW-0472">Membrane</keyword>
<keyword id="KW-0597">Phosphoprotein</keyword>
<keyword id="KW-1185">Reference proteome</keyword>
<keyword id="KW-0677">Repeat</keyword>
<reference key="1">
    <citation type="journal article" date="2005" name="Science">
        <title>The transcriptional landscape of the mammalian genome.</title>
        <authorList>
            <person name="Carninci P."/>
            <person name="Kasukawa T."/>
            <person name="Katayama S."/>
            <person name="Gough J."/>
            <person name="Frith M.C."/>
            <person name="Maeda N."/>
            <person name="Oyama R."/>
            <person name="Ravasi T."/>
            <person name="Lenhard B."/>
            <person name="Wells C."/>
            <person name="Kodzius R."/>
            <person name="Shimokawa K."/>
            <person name="Bajic V.B."/>
            <person name="Brenner S.E."/>
            <person name="Batalov S."/>
            <person name="Forrest A.R."/>
            <person name="Zavolan M."/>
            <person name="Davis M.J."/>
            <person name="Wilming L.G."/>
            <person name="Aidinis V."/>
            <person name="Allen J.E."/>
            <person name="Ambesi-Impiombato A."/>
            <person name="Apweiler R."/>
            <person name="Aturaliya R.N."/>
            <person name="Bailey T.L."/>
            <person name="Bansal M."/>
            <person name="Baxter L."/>
            <person name="Beisel K.W."/>
            <person name="Bersano T."/>
            <person name="Bono H."/>
            <person name="Chalk A.M."/>
            <person name="Chiu K.P."/>
            <person name="Choudhary V."/>
            <person name="Christoffels A."/>
            <person name="Clutterbuck D.R."/>
            <person name="Crowe M.L."/>
            <person name="Dalla E."/>
            <person name="Dalrymple B.P."/>
            <person name="de Bono B."/>
            <person name="Della Gatta G."/>
            <person name="di Bernardo D."/>
            <person name="Down T."/>
            <person name="Engstrom P."/>
            <person name="Fagiolini M."/>
            <person name="Faulkner G."/>
            <person name="Fletcher C.F."/>
            <person name="Fukushima T."/>
            <person name="Furuno M."/>
            <person name="Futaki S."/>
            <person name="Gariboldi M."/>
            <person name="Georgii-Hemming P."/>
            <person name="Gingeras T.R."/>
            <person name="Gojobori T."/>
            <person name="Green R.E."/>
            <person name="Gustincich S."/>
            <person name="Harbers M."/>
            <person name="Hayashi Y."/>
            <person name="Hensch T.K."/>
            <person name="Hirokawa N."/>
            <person name="Hill D."/>
            <person name="Huminiecki L."/>
            <person name="Iacono M."/>
            <person name="Ikeo K."/>
            <person name="Iwama A."/>
            <person name="Ishikawa T."/>
            <person name="Jakt M."/>
            <person name="Kanapin A."/>
            <person name="Katoh M."/>
            <person name="Kawasawa Y."/>
            <person name="Kelso J."/>
            <person name="Kitamura H."/>
            <person name="Kitano H."/>
            <person name="Kollias G."/>
            <person name="Krishnan S.P."/>
            <person name="Kruger A."/>
            <person name="Kummerfeld S.K."/>
            <person name="Kurochkin I.V."/>
            <person name="Lareau L.F."/>
            <person name="Lazarevic D."/>
            <person name="Lipovich L."/>
            <person name="Liu J."/>
            <person name="Liuni S."/>
            <person name="McWilliam S."/>
            <person name="Madan Babu M."/>
            <person name="Madera M."/>
            <person name="Marchionni L."/>
            <person name="Matsuda H."/>
            <person name="Matsuzawa S."/>
            <person name="Miki H."/>
            <person name="Mignone F."/>
            <person name="Miyake S."/>
            <person name="Morris K."/>
            <person name="Mottagui-Tabar S."/>
            <person name="Mulder N."/>
            <person name="Nakano N."/>
            <person name="Nakauchi H."/>
            <person name="Ng P."/>
            <person name="Nilsson R."/>
            <person name="Nishiguchi S."/>
            <person name="Nishikawa S."/>
            <person name="Nori F."/>
            <person name="Ohara O."/>
            <person name="Okazaki Y."/>
            <person name="Orlando V."/>
            <person name="Pang K.C."/>
            <person name="Pavan W.J."/>
            <person name="Pavesi G."/>
            <person name="Pesole G."/>
            <person name="Petrovsky N."/>
            <person name="Piazza S."/>
            <person name="Reed J."/>
            <person name="Reid J.F."/>
            <person name="Ring B.Z."/>
            <person name="Ringwald M."/>
            <person name="Rost B."/>
            <person name="Ruan Y."/>
            <person name="Salzberg S.L."/>
            <person name="Sandelin A."/>
            <person name="Schneider C."/>
            <person name="Schoenbach C."/>
            <person name="Sekiguchi K."/>
            <person name="Semple C.A."/>
            <person name="Seno S."/>
            <person name="Sessa L."/>
            <person name="Sheng Y."/>
            <person name="Shibata Y."/>
            <person name="Shimada H."/>
            <person name="Shimada K."/>
            <person name="Silva D."/>
            <person name="Sinclair B."/>
            <person name="Sperling S."/>
            <person name="Stupka E."/>
            <person name="Sugiura K."/>
            <person name="Sultana R."/>
            <person name="Takenaka Y."/>
            <person name="Taki K."/>
            <person name="Tammoja K."/>
            <person name="Tan S.L."/>
            <person name="Tang S."/>
            <person name="Taylor M.S."/>
            <person name="Tegner J."/>
            <person name="Teichmann S.A."/>
            <person name="Ueda H.R."/>
            <person name="van Nimwegen E."/>
            <person name="Verardo R."/>
            <person name="Wei C.L."/>
            <person name="Yagi K."/>
            <person name="Yamanishi H."/>
            <person name="Zabarovsky E."/>
            <person name="Zhu S."/>
            <person name="Zimmer A."/>
            <person name="Hide W."/>
            <person name="Bult C."/>
            <person name="Grimmond S.M."/>
            <person name="Teasdale R.D."/>
            <person name="Liu E.T."/>
            <person name="Brusic V."/>
            <person name="Quackenbush J."/>
            <person name="Wahlestedt C."/>
            <person name="Mattick J.S."/>
            <person name="Hume D.A."/>
            <person name="Kai C."/>
            <person name="Sasaki D."/>
            <person name="Tomaru Y."/>
            <person name="Fukuda S."/>
            <person name="Kanamori-Katayama M."/>
            <person name="Suzuki M."/>
            <person name="Aoki J."/>
            <person name="Arakawa T."/>
            <person name="Iida J."/>
            <person name="Imamura K."/>
            <person name="Itoh M."/>
            <person name="Kato T."/>
            <person name="Kawaji H."/>
            <person name="Kawagashira N."/>
            <person name="Kawashima T."/>
            <person name="Kojima M."/>
            <person name="Kondo S."/>
            <person name="Konno H."/>
            <person name="Nakano K."/>
            <person name="Ninomiya N."/>
            <person name="Nishio T."/>
            <person name="Okada M."/>
            <person name="Plessy C."/>
            <person name="Shibata K."/>
            <person name="Shiraki T."/>
            <person name="Suzuki S."/>
            <person name="Tagami M."/>
            <person name="Waki K."/>
            <person name="Watahiki A."/>
            <person name="Okamura-Oho Y."/>
            <person name="Suzuki H."/>
            <person name="Kawai J."/>
            <person name="Hayashizaki Y."/>
        </authorList>
    </citation>
    <scope>NUCLEOTIDE SEQUENCE [LARGE SCALE MRNA] (ISOFORM 1)</scope>
    <source>
        <strain>C57BL/6J</strain>
        <tissue>Egg</tissue>
    </source>
</reference>
<reference key="2">
    <citation type="submission" date="2005-09" db="EMBL/GenBank/DDBJ databases">
        <authorList>
            <person name="Mural R.J."/>
            <person name="Adams M.D."/>
            <person name="Myers E.W."/>
            <person name="Smith H.O."/>
            <person name="Venter J.C."/>
        </authorList>
    </citation>
    <scope>NUCLEOTIDE SEQUENCE [LARGE SCALE GENOMIC DNA]</scope>
</reference>
<reference key="3">
    <citation type="journal article" date="2004" name="Genome Res.">
        <title>The status, quality, and expansion of the NIH full-length cDNA project: the Mammalian Gene Collection (MGC).</title>
        <authorList>
            <consortium name="The MGC Project Team"/>
        </authorList>
    </citation>
    <scope>NUCLEOTIDE SEQUENCE [LARGE SCALE MRNA] (ISOFORMS 1 AND 2)</scope>
    <source>
        <strain>C57BL/6J</strain>
        <tissue>Brain</tissue>
    </source>
</reference>
<reference key="4">
    <citation type="journal article" date="2010" name="Cell">
        <title>A tissue-specific atlas of mouse protein phosphorylation and expression.</title>
        <authorList>
            <person name="Huttlin E.L."/>
            <person name="Jedrychowski M.P."/>
            <person name="Elias J.E."/>
            <person name="Goswami T."/>
            <person name="Rad R."/>
            <person name="Beausoleil S.A."/>
            <person name="Villen J."/>
            <person name="Haas W."/>
            <person name="Sowa M.E."/>
            <person name="Gygi S.P."/>
        </authorList>
    </citation>
    <scope>PHOSPHORYLATION [LARGE SCALE ANALYSIS] AT SER-411</scope>
    <scope>IDENTIFICATION BY MASS SPECTROMETRY [LARGE SCALE ANALYSIS]</scope>
    <source>
        <tissue>Kidney</tissue>
    </source>
</reference>
<sequence>MTGEKIRSLRRDHKPSKEDGDVLEPCEEEATAALGGAFTGGRSGPGGSGKGGKACHKIFSHHHRLQLKAPAVPGPGVPAPPQHNAVTATCPAPACLGGSNPALVADGGGCPSLYPVHECVFKGDVRRLSSLIRTHNIGQKDNHGNTPLHLAVMLGNKECAHLLLAHNAPVKVKNAQGWSPLAEAISYGDRQMITALLRKLKQQSRESVGEKRPRLLKALKELGDFYLELHWDFQSWVPLLSRILPSDACKIYKQGINIRLDTTLIDFTDMKCQRGDLSFIFNGDAAPSESFVVLDNEQKVYQRIHHEESEMETEEEVDILMSSDIYSATLSTKSISFTRAQTGWLFREDKTERVGNFLADFYLVNGLVLESRKRREHLSEEDILRNKAIMESLSKGGSLAEQSFEPVRRQSLTPPPQNTITWEEYISAENGKAPHLGRELVCKESKKTFKATVAMSQEFPLGIESLLNVLEVIAPFKHFNKLREFVQMKLPPGFPVKLDIPVFPTITATVTFQEFRCDEFDGSIFAIPEDYKEDPSRFPDL</sequence>
<accession>Q3UX43</accession>
<accession>B2RST2</accession>
<accession>Q6P1G4</accession>
<name>AN13C_MOUSE</name>
<comment type="function">
    <text evidence="1">Acts as a molecular chaperone for G protein-coupled receptors, regulating their biogenesis and exit from the ER.</text>
</comment>
<comment type="subcellular location">
    <subcellularLocation>
        <location evidence="1">Endoplasmic reticulum membrane</location>
    </subcellularLocation>
    <text evidence="1">Associated with the cytosolic side.</text>
</comment>
<comment type="alternative products">
    <event type="alternative splicing"/>
    <isoform>
        <id>Q3UX43-1</id>
        <name>1</name>
        <sequence type="displayed"/>
    </isoform>
    <isoform>
        <id>Q3UX43-2</id>
        <name>2</name>
        <sequence type="described" ref="VSP_019409 VSP_019410"/>
    </isoform>
</comment>
<protein>
    <recommendedName>
        <fullName>Ankyrin repeat domain-containing protein 13C</fullName>
    </recommendedName>
</protein>
<proteinExistence type="evidence at protein level"/>
<dbReference type="EMBL" id="AK135906">
    <property type="protein sequence ID" value="BAE22720.1"/>
    <property type="molecule type" value="mRNA"/>
</dbReference>
<dbReference type="EMBL" id="BY751496">
    <property type="status" value="NOT_ANNOTATED_CDS"/>
    <property type="molecule type" value="mRNA"/>
</dbReference>
<dbReference type="EMBL" id="CH466532">
    <property type="protein sequence ID" value="EDL11855.1"/>
    <property type="molecule type" value="Genomic_DNA"/>
</dbReference>
<dbReference type="EMBL" id="BC065088">
    <property type="protein sequence ID" value="AAH65088.1"/>
    <property type="molecule type" value="mRNA"/>
</dbReference>
<dbReference type="EMBL" id="BC138991">
    <property type="protein sequence ID" value="AAI38992.1"/>
    <property type="molecule type" value="mRNA"/>
</dbReference>
<dbReference type="EMBL" id="BC138992">
    <property type="protein sequence ID" value="AAI38993.1"/>
    <property type="molecule type" value="mRNA"/>
</dbReference>
<dbReference type="CCDS" id="CCDS17933.1">
    <molecule id="Q3UX43-1"/>
</dbReference>
<dbReference type="RefSeq" id="NP_001013828.1">
    <molecule id="Q3UX43-1"/>
    <property type="nucleotide sequence ID" value="NM_001013806.2"/>
</dbReference>
<dbReference type="SMR" id="Q3UX43"/>
<dbReference type="BioGRID" id="241374">
    <property type="interactions" value="1"/>
</dbReference>
<dbReference type="FunCoup" id="Q3UX43">
    <property type="interactions" value="4297"/>
</dbReference>
<dbReference type="STRING" id="10090.ENSMUSP00000038662"/>
<dbReference type="iPTMnet" id="Q3UX43"/>
<dbReference type="PhosphoSitePlus" id="Q3UX43"/>
<dbReference type="PaxDb" id="10090-ENSMUSP00000038662"/>
<dbReference type="ProteomicsDB" id="282089">
    <molecule id="Q3UX43-1"/>
</dbReference>
<dbReference type="ProteomicsDB" id="282090">
    <molecule id="Q3UX43-2"/>
</dbReference>
<dbReference type="Pumba" id="Q3UX43"/>
<dbReference type="Antibodypedia" id="33431">
    <property type="antibodies" value="80 antibodies from 17 providers"/>
</dbReference>
<dbReference type="DNASU" id="433667"/>
<dbReference type="Ensembl" id="ENSMUST00000040787.13">
    <molecule id="Q3UX43-1"/>
    <property type="protein sequence ID" value="ENSMUSP00000038662.9"/>
    <property type="gene ID" value="ENSMUSG00000039988.16"/>
</dbReference>
<dbReference type="GeneID" id="433667"/>
<dbReference type="KEGG" id="mmu:433667"/>
<dbReference type="UCSC" id="uc008rvk.1">
    <molecule id="Q3UX43-1"/>
    <property type="organism name" value="mouse"/>
</dbReference>
<dbReference type="AGR" id="MGI:2139746"/>
<dbReference type="CTD" id="81573"/>
<dbReference type="MGI" id="MGI:2139746">
    <property type="gene designation" value="Ankrd13c"/>
</dbReference>
<dbReference type="VEuPathDB" id="HostDB:ENSMUSG00000039988"/>
<dbReference type="eggNOG" id="KOG0522">
    <property type="taxonomic scope" value="Eukaryota"/>
</dbReference>
<dbReference type="GeneTree" id="ENSGT00950000182928"/>
<dbReference type="HOGENOM" id="CLU_026137_1_0_1"/>
<dbReference type="InParanoid" id="Q3UX43"/>
<dbReference type="OMA" id="YPMHQSV"/>
<dbReference type="OrthoDB" id="1585644at2759"/>
<dbReference type="PhylomeDB" id="Q3UX43"/>
<dbReference type="TreeFam" id="TF314176"/>
<dbReference type="BioGRID-ORCS" id="433667">
    <property type="hits" value="2 hits in 76 CRISPR screens"/>
</dbReference>
<dbReference type="ChiTaRS" id="Ankrd13c">
    <property type="organism name" value="mouse"/>
</dbReference>
<dbReference type="PRO" id="PR:Q3UX43"/>
<dbReference type="Proteomes" id="UP000000589">
    <property type="component" value="Chromosome 3"/>
</dbReference>
<dbReference type="RNAct" id="Q3UX43">
    <property type="molecule type" value="protein"/>
</dbReference>
<dbReference type="Bgee" id="ENSMUSG00000039988">
    <property type="expression patterns" value="Expressed in saccule of membranous labyrinth and 263 other cell types or tissues"/>
</dbReference>
<dbReference type="ExpressionAtlas" id="Q3UX43">
    <property type="expression patterns" value="baseline and differential"/>
</dbReference>
<dbReference type="GO" id="GO:0005789">
    <property type="term" value="C:endoplasmic reticulum membrane"/>
    <property type="evidence" value="ECO:0007669"/>
    <property type="project" value="UniProtKB-SubCell"/>
</dbReference>
<dbReference type="GO" id="GO:0048471">
    <property type="term" value="C:perinuclear region of cytoplasm"/>
    <property type="evidence" value="ECO:0007669"/>
    <property type="project" value="Ensembl"/>
</dbReference>
<dbReference type="GO" id="GO:0005102">
    <property type="term" value="F:signaling receptor binding"/>
    <property type="evidence" value="ECO:0007669"/>
    <property type="project" value="Ensembl"/>
</dbReference>
<dbReference type="GO" id="GO:0006621">
    <property type="term" value="P:protein retention in ER lumen"/>
    <property type="evidence" value="ECO:0007669"/>
    <property type="project" value="Ensembl"/>
</dbReference>
<dbReference type="GO" id="GO:2000209">
    <property type="term" value="P:regulation of anoikis"/>
    <property type="evidence" value="ECO:0007669"/>
    <property type="project" value="Ensembl"/>
</dbReference>
<dbReference type="FunFam" id="1.25.40.20:FF:000073">
    <property type="entry name" value="Ankyrin repeat domain-containing protein 13C"/>
    <property type="match status" value="1"/>
</dbReference>
<dbReference type="Gene3D" id="1.25.40.20">
    <property type="entry name" value="Ankyrin repeat-containing domain"/>
    <property type="match status" value="1"/>
</dbReference>
<dbReference type="InterPro" id="IPR021832">
    <property type="entry name" value="ANKRD13"/>
</dbReference>
<dbReference type="InterPro" id="IPR055285">
    <property type="entry name" value="ANKRD13_C"/>
</dbReference>
<dbReference type="InterPro" id="IPR002110">
    <property type="entry name" value="Ankyrin_rpt"/>
</dbReference>
<dbReference type="InterPro" id="IPR036770">
    <property type="entry name" value="Ankyrin_rpt-contain_sf"/>
</dbReference>
<dbReference type="PANTHER" id="PTHR12447">
    <property type="entry name" value="ANKYRIN REPEAT DOMAIN-CONTAINING PROTEIN 13"/>
    <property type="match status" value="1"/>
</dbReference>
<dbReference type="PANTHER" id="PTHR12447:SF25">
    <property type="entry name" value="ANKYRIN REPEAT DOMAIN-CONTAINING PROTEIN 13C"/>
    <property type="match status" value="1"/>
</dbReference>
<dbReference type="Pfam" id="PF12796">
    <property type="entry name" value="Ank_2"/>
    <property type="match status" value="1"/>
</dbReference>
<dbReference type="Pfam" id="PF11904">
    <property type="entry name" value="ANKRD13_C"/>
    <property type="match status" value="1"/>
</dbReference>
<dbReference type="SMART" id="SM00248">
    <property type="entry name" value="ANK"/>
    <property type="match status" value="2"/>
</dbReference>
<dbReference type="SUPFAM" id="SSF48403">
    <property type="entry name" value="Ankyrin repeat"/>
    <property type="match status" value="1"/>
</dbReference>
<dbReference type="PROSITE" id="PS50297">
    <property type="entry name" value="ANK_REP_REGION"/>
    <property type="match status" value="1"/>
</dbReference>
<dbReference type="PROSITE" id="PS50088">
    <property type="entry name" value="ANK_REPEAT"/>
    <property type="match status" value="1"/>
</dbReference>
<feature type="chain" id="PRO_0000240646" description="Ankyrin repeat domain-containing protein 13C">
    <location>
        <begin position="1"/>
        <end position="541"/>
    </location>
</feature>
<feature type="repeat" description="ANK 1">
    <location>
        <begin position="111"/>
        <end position="142"/>
    </location>
</feature>
<feature type="repeat" description="ANK 2">
    <location>
        <begin position="143"/>
        <end position="172"/>
    </location>
</feature>
<feature type="repeat" description="ANK 3">
    <location>
        <begin position="176"/>
        <end position="205"/>
    </location>
</feature>
<feature type="region of interest" description="Disordered" evidence="2">
    <location>
        <begin position="1"/>
        <end position="53"/>
    </location>
</feature>
<feature type="compositionally biased region" description="Basic and acidic residues" evidence="2">
    <location>
        <begin position="1"/>
        <end position="20"/>
    </location>
</feature>
<feature type="compositionally biased region" description="Acidic residues" evidence="2">
    <location>
        <begin position="21"/>
        <end position="30"/>
    </location>
</feature>
<feature type="compositionally biased region" description="Gly residues" evidence="2">
    <location>
        <begin position="37"/>
        <end position="52"/>
    </location>
</feature>
<feature type="modified residue" description="Phosphoserine" evidence="5">
    <location>
        <position position="411"/>
    </location>
</feature>
<feature type="splice variant" id="VSP_019409" description="In isoform 2." evidence="3">
    <original>VPLLSRILPSDAC</original>
    <variation>GKSVLRFIIKVQL</variation>
    <location>
        <begin position="237"/>
        <end position="249"/>
    </location>
</feature>
<feature type="splice variant" id="VSP_019410" description="In isoform 2." evidence="3">
    <location>
        <begin position="250"/>
        <end position="541"/>
    </location>
</feature>
<feature type="sequence conflict" description="In Ref. 2; BAE22720." evidence="4" ref="2">
    <original>APAVPGPGVPAPPQHNAVTATCPAPACLGGSNPALVADGGGCP</original>
    <variation>VSSEALARGAGERWLRRVFPSEEEAAAAAPGVVRSWSLELRLS</variation>
    <location>
        <begin position="69"/>
        <end position="111"/>
    </location>
</feature>